<protein>
    <recommendedName>
        <fullName evidence="1">Large ribosomal subunit protein uL16</fullName>
    </recommendedName>
    <alternativeName>
        <fullName evidence="3">50S ribosomal protein L16</fullName>
    </alternativeName>
</protein>
<accession>Q055D7</accession>
<organism>
    <name type="scientific">Leptospira borgpetersenii serovar Hardjo-bovis (strain L550)</name>
    <dbReference type="NCBI Taxonomy" id="355276"/>
    <lineage>
        <taxon>Bacteria</taxon>
        <taxon>Pseudomonadati</taxon>
        <taxon>Spirochaetota</taxon>
        <taxon>Spirochaetia</taxon>
        <taxon>Leptospirales</taxon>
        <taxon>Leptospiraceae</taxon>
        <taxon>Leptospira</taxon>
    </lineage>
</organism>
<sequence length="137" mass="15506">MLSPKRVKFRKRQRGRLKGTDERGSSVSFGEFGLKAVTSGRLTARQIEAARITINRQVKRGGKLWIRIFPHTPITKKPAETRMGKGKGNPEFWIAEIRPGRILFEMSGIDEETAEKALSLASYKLPIHTEFVKRSAL</sequence>
<gene>
    <name evidence="1" type="primary">rplP1</name>
    <name type="ordered locus">LBL_0420</name>
</gene>
<gene>
    <name evidence="1" type="primary">rplP2</name>
    <name type="ordered locus">LBL_0460</name>
</gene>
<dbReference type="EMBL" id="CP000348">
    <property type="protein sequence ID" value="ABJ78018.1"/>
    <property type="molecule type" value="Genomic_DNA"/>
</dbReference>
<dbReference type="EMBL" id="CP000348">
    <property type="protein sequence ID" value="ABJ78058.1"/>
    <property type="molecule type" value="Genomic_DNA"/>
</dbReference>
<dbReference type="SMR" id="Q055D7"/>
<dbReference type="KEGG" id="lbl:LBL_0420"/>
<dbReference type="KEGG" id="lbl:LBL_0460"/>
<dbReference type="HOGENOM" id="CLU_078858_2_1_12"/>
<dbReference type="GO" id="GO:0022625">
    <property type="term" value="C:cytosolic large ribosomal subunit"/>
    <property type="evidence" value="ECO:0007669"/>
    <property type="project" value="TreeGrafter"/>
</dbReference>
<dbReference type="GO" id="GO:0019843">
    <property type="term" value="F:rRNA binding"/>
    <property type="evidence" value="ECO:0007669"/>
    <property type="project" value="UniProtKB-UniRule"/>
</dbReference>
<dbReference type="GO" id="GO:0003735">
    <property type="term" value="F:structural constituent of ribosome"/>
    <property type="evidence" value="ECO:0007669"/>
    <property type="project" value="InterPro"/>
</dbReference>
<dbReference type="GO" id="GO:0000049">
    <property type="term" value="F:tRNA binding"/>
    <property type="evidence" value="ECO:0007669"/>
    <property type="project" value="UniProtKB-KW"/>
</dbReference>
<dbReference type="GO" id="GO:0006412">
    <property type="term" value="P:translation"/>
    <property type="evidence" value="ECO:0007669"/>
    <property type="project" value="UniProtKB-UniRule"/>
</dbReference>
<dbReference type="CDD" id="cd01433">
    <property type="entry name" value="Ribosomal_L16_L10e"/>
    <property type="match status" value="1"/>
</dbReference>
<dbReference type="FunFam" id="3.90.1170.10:FF:000001">
    <property type="entry name" value="50S ribosomal protein L16"/>
    <property type="match status" value="1"/>
</dbReference>
<dbReference type="Gene3D" id="3.90.1170.10">
    <property type="entry name" value="Ribosomal protein L10e/L16"/>
    <property type="match status" value="1"/>
</dbReference>
<dbReference type="HAMAP" id="MF_01342">
    <property type="entry name" value="Ribosomal_uL16"/>
    <property type="match status" value="1"/>
</dbReference>
<dbReference type="InterPro" id="IPR047873">
    <property type="entry name" value="Ribosomal_uL16"/>
</dbReference>
<dbReference type="InterPro" id="IPR000114">
    <property type="entry name" value="Ribosomal_uL16_bact-type"/>
</dbReference>
<dbReference type="InterPro" id="IPR020798">
    <property type="entry name" value="Ribosomal_uL16_CS"/>
</dbReference>
<dbReference type="InterPro" id="IPR016180">
    <property type="entry name" value="Ribosomal_uL16_dom"/>
</dbReference>
<dbReference type="InterPro" id="IPR036920">
    <property type="entry name" value="Ribosomal_uL16_sf"/>
</dbReference>
<dbReference type="NCBIfam" id="TIGR01164">
    <property type="entry name" value="rplP_bact"/>
    <property type="match status" value="1"/>
</dbReference>
<dbReference type="PANTHER" id="PTHR12220">
    <property type="entry name" value="50S/60S RIBOSOMAL PROTEIN L16"/>
    <property type="match status" value="1"/>
</dbReference>
<dbReference type="PANTHER" id="PTHR12220:SF13">
    <property type="entry name" value="LARGE RIBOSOMAL SUBUNIT PROTEIN UL16M"/>
    <property type="match status" value="1"/>
</dbReference>
<dbReference type="Pfam" id="PF00252">
    <property type="entry name" value="Ribosomal_L16"/>
    <property type="match status" value="1"/>
</dbReference>
<dbReference type="PRINTS" id="PR00060">
    <property type="entry name" value="RIBOSOMALL16"/>
</dbReference>
<dbReference type="SUPFAM" id="SSF54686">
    <property type="entry name" value="Ribosomal protein L16p/L10e"/>
    <property type="match status" value="1"/>
</dbReference>
<dbReference type="PROSITE" id="PS00586">
    <property type="entry name" value="RIBOSOMAL_L16_1"/>
    <property type="match status" value="1"/>
</dbReference>
<dbReference type="PROSITE" id="PS00701">
    <property type="entry name" value="RIBOSOMAL_L16_2"/>
    <property type="match status" value="1"/>
</dbReference>
<keyword id="KW-0687">Ribonucleoprotein</keyword>
<keyword id="KW-0689">Ribosomal protein</keyword>
<keyword id="KW-0694">RNA-binding</keyword>
<keyword id="KW-0699">rRNA-binding</keyword>
<keyword id="KW-0820">tRNA-binding</keyword>
<proteinExistence type="inferred from homology"/>
<name>RL16_LEPBL</name>
<comment type="function">
    <text evidence="1">Binds 23S rRNA and is also seen to make contacts with the A and possibly P site tRNAs.</text>
</comment>
<comment type="subunit">
    <text evidence="1">Part of the 50S ribosomal subunit.</text>
</comment>
<comment type="similarity">
    <text evidence="1">Belongs to the universal ribosomal protein uL16 family.</text>
</comment>
<evidence type="ECO:0000255" key="1">
    <source>
        <dbReference type="HAMAP-Rule" id="MF_01342"/>
    </source>
</evidence>
<evidence type="ECO:0000256" key="2">
    <source>
        <dbReference type="SAM" id="MobiDB-lite"/>
    </source>
</evidence>
<evidence type="ECO:0000305" key="3"/>
<reference key="1">
    <citation type="journal article" date="2006" name="Proc. Natl. Acad. Sci. U.S.A.">
        <title>Genome reduction in Leptospira borgpetersenii reflects limited transmission potential.</title>
        <authorList>
            <person name="Bulach D.M."/>
            <person name="Zuerner R.L."/>
            <person name="Wilson P."/>
            <person name="Seemann T."/>
            <person name="McGrath A."/>
            <person name="Cullen P.A."/>
            <person name="Davis J."/>
            <person name="Johnson M."/>
            <person name="Kuczek E."/>
            <person name="Alt D.P."/>
            <person name="Peterson-Burch B."/>
            <person name="Coppel R.L."/>
            <person name="Rood J.I."/>
            <person name="Davies J.K."/>
            <person name="Adler B."/>
        </authorList>
    </citation>
    <scope>NUCLEOTIDE SEQUENCE [LARGE SCALE GENOMIC DNA]</scope>
    <source>
        <strain>L550</strain>
    </source>
</reference>
<feature type="chain" id="PRO_0000354603" description="Large ribosomal subunit protein uL16">
    <location>
        <begin position="1"/>
        <end position="137"/>
    </location>
</feature>
<feature type="region of interest" description="Disordered" evidence="2">
    <location>
        <begin position="1"/>
        <end position="24"/>
    </location>
</feature>
<feature type="compositionally biased region" description="Basic residues" evidence="2">
    <location>
        <begin position="1"/>
        <end position="17"/>
    </location>
</feature>